<keyword id="KW-0963">Cytoplasm</keyword>
<keyword id="KW-0378">Hydrolase</keyword>
<keyword id="KW-0464">Manganese</keyword>
<keyword id="KW-0479">Metal-binding</keyword>
<dbReference type="EC" id="3.6.1.1" evidence="1"/>
<dbReference type="EMBL" id="AE014074">
    <property type="protein sequence ID" value="AAM78885.1"/>
    <property type="status" value="ALT_INIT"/>
    <property type="molecule type" value="Genomic_DNA"/>
</dbReference>
<dbReference type="RefSeq" id="WP_002990948.1">
    <property type="nucleotide sequence ID" value="NC_004070.1"/>
</dbReference>
<dbReference type="SMR" id="P0DD14"/>
<dbReference type="KEGG" id="spg:SpyM3_0278"/>
<dbReference type="HOGENOM" id="CLU_025243_0_1_9"/>
<dbReference type="Proteomes" id="UP000000564">
    <property type="component" value="Chromosome"/>
</dbReference>
<dbReference type="GO" id="GO:0005737">
    <property type="term" value="C:cytoplasm"/>
    <property type="evidence" value="ECO:0007669"/>
    <property type="project" value="UniProtKB-SubCell"/>
</dbReference>
<dbReference type="GO" id="GO:0004427">
    <property type="term" value="F:inorganic diphosphate phosphatase activity"/>
    <property type="evidence" value="ECO:0007669"/>
    <property type="project" value="UniProtKB-UniRule"/>
</dbReference>
<dbReference type="GO" id="GO:0030145">
    <property type="term" value="F:manganese ion binding"/>
    <property type="evidence" value="ECO:0007669"/>
    <property type="project" value="UniProtKB-UniRule"/>
</dbReference>
<dbReference type="FunFam" id="3.10.310.20:FF:000001">
    <property type="entry name" value="Probable manganese-dependent inorganic pyrophosphatase"/>
    <property type="match status" value="1"/>
</dbReference>
<dbReference type="FunFam" id="3.90.1640.10:FF:000001">
    <property type="entry name" value="Probable manganese-dependent inorganic pyrophosphatase"/>
    <property type="match status" value="1"/>
</dbReference>
<dbReference type="Gene3D" id="3.10.310.20">
    <property type="entry name" value="DHHA2 domain"/>
    <property type="match status" value="1"/>
</dbReference>
<dbReference type="Gene3D" id="3.90.1640.10">
    <property type="entry name" value="inorganic pyrophosphatase (n-terminal core)"/>
    <property type="match status" value="1"/>
</dbReference>
<dbReference type="HAMAP" id="MF_00207">
    <property type="entry name" value="PPase_C"/>
    <property type="match status" value="1"/>
</dbReference>
<dbReference type="InterPro" id="IPR001667">
    <property type="entry name" value="DDH_dom"/>
</dbReference>
<dbReference type="InterPro" id="IPR038763">
    <property type="entry name" value="DHH_sf"/>
</dbReference>
<dbReference type="InterPro" id="IPR004097">
    <property type="entry name" value="DHHA2"/>
</dbReference>
<dbReference type="InterPro" id="IPR038222">
    <property type="entry name" value="DHHA2_dom_sf"/>
</dbReference>
<dbReference type="InterPro" id="IPR022934">
    <property type="entry name" value="Mn-dep_inorganic_PyrPase"/>
</dbReference>
<dbReference type="InterPro" id="IPR051319">
    <property type="entry name" value="Oligoribo/pAp-PDE_c-di-AMP_PDE"/>
</dbReference>
<dbReference type="NCBIfam" id="NF003877">
    <property type="entry name" value="PRK05427.1"/>
    <property type="match status" value="1"/>
</dbReference>
<dbReference type="PANTHER" id="PTHR47618">
    <property type="entry name" value="BIFUNCTIONAL OLIGORIBONUCLEASE AND PAP PHOSPHATASE NRNA"/>
    <property type="match status" value="1"/>
</dbReference>
<dbReference type="PANTHER" id="PTHR47618:SF1">
    <property type="entry name" value="BIFUNCTIONAL OLIGORIBONUCLEASE AND PAP PHOSPHATASE NRNA"/>
    <property type="match status" value="1"/>
</dbReference>
<dbReference type="Pfam" id="PF01368">
    <property type="entry name" value="DHH"/>
    <property type="match status" value="1"/>
</dbReference>
<dbReference type="Pfam" id="PF02833">
    <property type="entry name" value="DHHA2"/>
    <property type="match status" value="1"/>
</dbReference>
<dbReference type="SMART" id="SM01131">
    <property type="entry name" value="DHHA2"/>
    <property type="match status" value="1"/>
</dbReference>
<dbReference type="SUPFAM" id="SSF64182">
    <property type="entry name" value="DHH phosphoesterases"/>
    <property type="match status" value="1"/>
</dbReference>
<organism>
    <name type="scientific">Streptococcus pyogenes serotype M3 (strain ATCC BAA-595 / MGAS315)</name>
    <dbReference type="NCBI Taxonomy" id="198466"/>
    <lineage>
        <taxon>Bacteria</taxon>
        <taxon>Bacillati</taxon>
        <taxon>Bacillota</taxon>
        <taxon>Bacilli</taxon>
        <taxon>Lactobacillales</taxon>
        <taxon>Streptococcaceae</taxon>
        <taxon>Streptococcus</taxon>
    </lineage>
</organism>
<name>PPAC_STRP3</name>
<gene>
    <name evidence="1" type="primary">ppaC</name>
    <name type="ordered locus">SpyM3_0278</name>
</gene>
<evidence type="ECO:0000255" key="1">
    <source>
        <dbReference type="HAMAP-Rule" id="MF_00207"/>
    </source>
</evidence>
<evidence type="ECO:0000305" key="2"/>
<accession>P0DD14</accession>
<accession>P65758</accession>
<accession>Q8K8I2</accession>
<accession>Q9A1A2</accession>
<proteinExistence type="inferred from homology"/>
<sequence length="311" mass="33617">MSKILVFGHQNPDTDAIASSYAFDYLSQKAFGLDTEVVALGTPNEETAFALDYFGVEAPRVVESAKAQGSEQVILTDHNEFQQSIADIREVEVYGVVDHHRVANFETANPLYMRVEPVGSASSIVYRMFKENGIEVPKAIAGMLLSGLISDTLLLKSPTTHVSDHLVAEELAELAEVNLEDYGMALLKAGTNLASKSEVELIGIDAKTFELNGNAVRVAQVNTVDIAEVLERQEAIEAAIKDAMAAEGYSDFVLMITDIVNSNSEILAIGANMDKVEAAFNFTLDNNHAFLAGAVSRKKQVVPQLTESFGA</sequence>
<reference key="1">
    <citation type="journal article" date="2002" name="Proc. Natl. Acad. Sci. U.S.A.">
        <title>Genome sequence of a serotype M3 strain of group A Streptococcus: phage-encoded toxins, the high-virulence phenotype, and clone emergence.</title>
        <authorList>
            <person name="Beres S.B."/>
            <person name="Sylva G.L."/>
            <person name="Barbian K.D."/>
            <person name="Lei B."/>
            <person name="Hoff J.S."/>
            <person name="Mammarella N.D."/>
            <person name="Liu M.-Y."/>
            <person name="Smoot J.C."/>
            <person name="Porcella S.F."/>
            <person name="Parkins L.D."/>
            <person name="Campbell D.S."/>
            <person name="Smith T.M."/>
            <person name="McCormick J.K."/>
            <person name="Leung D.Y.M."/>
            <person name="Schlievert P.M."/>
            <person name="Musser J.M."/>
        </authorList>
    </citation>
    <scope>NUCLEOTIDE SEQUENCE [LARGE SCALE GENOMIC DNA]</scope>
    <source>
        <strain>ATCC BAA-595 / MGAS315</strain>
    </source>
</reference>
<feature type="chain" id="PRO_0000158594" description="Probable manganese-dependent inorganic pyrophosphatase">
    <location>
        <begin position="1"/>
        <end position="311"/>
    </location>
</feature>
<feature type="binding site" evidence="1">
    <location>
        <position position="9"/>
    </location>
    <ligand>
        <name>Mn(2+)</name>
        <dbReference type="ChEBI" id="CHEBI:29035"/>
        <label>1</label>
    </ligand>
</feature>
<feature type="binding site" evidence="1">
    <location>
        <position position="13"/>
    </location>
    <ligand>
        <name>Mn(2+)</name>
        <dbReference type="ChEBI" id="CHEBI:29035"/>
        <label>1</label>
    </ligand>
</feature>
<feature type="binding site" evidence="1">
    <location>
        <position position="15"/>
    </location>
    <ligand>
        <name>Mn(2+)</name>
        <dbReference type="ChEBI" id="CHEBI:29035"/>
        <label>2</label>
    </ligand>
</feature>
<feature type="binding site" evidence="1">
    <location>
        <position position="77"/>
    </location>
    <ligand>
        <name>Mn(2+)</name>
        <dbReference type="ChEBI" id="CHEBI:29035"/>
        <label>1</label>
    </ligand>
</feature>
<feature type="binding site" evidence="1">
    <location>
        <position position="77"/>
    </location>
    <ligand>
        <name>Mn(2+)</name>
        <dbReference type="ChEBI" id="CHEBI:29035"/>
        <label>2</label>
    </ligand>
</feature>
<feature type="binding site" evidence="1">
    <location>
        <position position="99"/>
    </location>
    <ligand>
        <name>Mn(2+)</name>
        <dbReference type="ChEBI" id="CHEBI:29035"/>
        <label>2</label>
    </ligand>
</feature>
<feature type="binding site" evidence="1">
    <location>
        <position position="151"/>
    </location>
    <ligand>
        <name>Mn(2+)</name>
        <dbReference type="ChEBI" id="CHEBI:29035"/>
        <label>2</label>
    </ligand>
</feature>
<protein>
    <recommendedName>
        <fullName evidence="1">Probable manganese-dependent inorganic pyrophosphatase</fullName>
        <ecNumber evidence="1">3.6.1.1</ecNumber>
    </recommendedName>
    <alternativeName>
        <fullName evidence="1">Pyrophosphate phospho-hydrolase</fullName>
        <shortName evidence="1">PPase</shortName>
    </alternativeName>
</protein>
<comment type="catalytic activity">
    <reaction evidence="1">
        <text>diphosphate + H2O = 2 phosphate + H(+)</text>
        <dbReference type="Rhea" id="RHEA:24576"/>
        <dbReference type="ChEBI" id="CHEBI:15377"/>
        <dbReference type="ChEBI" id="CHEBI:15378"/>
        <dbReference type="ChEBI" id="CHEBI:33019"/>
        <dbReference type="ChEBI" id="CHEBI:43474"/>
        <dbReference type="EC" id="3.6.1.1"/>
    </reaction>
</comment>
<comment type="cofactor">
    <cofactor evidence="1">
        <name>Mn(2+)</name>
        <dbReference type="ChEBI" id="CHEBI:29035"/>
    </cofactor>
    <text evidence="1">Binds 2 manganese ions per subunit.</text>
</comment>
<comment type="subcellular location">
    <subcellularLocation>
        <location evidence="1">Cytoplasm</location>
    </subcellularLocation>
</comment>
<comment type="similarity">
    <text evidence="1">Belongs to the PPase class C family.</text>
</comment>
<comment type="sequence caution" evidence="2">
    <conflict type="erroneous initiation">
        <sequence resource="EMBL-CDS" id="AAM78885"/>
    </conflict>
</comment>